<protein>
    <recommendedName>
        <fullName evidence="1">Acetyl-CoA decarbonylase/synthase complex subunit epsilon</fullName>
        <shortName evidence="1">ACDS complex subunit epsilon</shortName>
    </recommendedName>
    <alternativeName>
        <fullName evidence="1">ACDS complex carbon monoxide dehydrogenase subunit epsilon</fullName>
        <shortName evidence="1">ACDS CODH subunit epsilon</shortName>
    </alternativeName>
</protein>
<sequence>MAAEVKKGIDTTKNPIPFEMAQIPGPEMAKTYLPKVIGAIIRKAKRPLLVVGAELFDDPVMFDKMIEMGKMGIPIAATAHSVKGFVDRGYLENVYQIGLHPLTNFLRFPDWKGLDGQGQYDVVIFLGIYYKFANGMLSTLKNFNRDIKRVSIDRYYHVNADMTFGNLAFNPDDYHAAVDEVIAAMKK</sequence>
<name>ACDE_METSH</name>
<gene>
    <name evidence="1" type="primary">cdhB</name>
</gene>
<dbReference type="EMBL" id="M55280">
    <property type="protein sequence ID" value="AAA72935.1"/>
    <property type="molecule type" value="Genomic_DNA"/>
</dbReference>
<dbReference type="PIR" id="B39764">
    <property type="entry name" value="B39764"/>
</dbReference>
<dbReference type="RefSeq" id="WP_013719067.1">
    <property type="nucleotide sequence ID" value="NZ_JBCEYQ010000042.1"/>
</dbReference>
<dbReference type="SMR" id="P26693"/>
<dbReference type="GeneID" id="10460944"/>
<dbReference type="OMA" id="HFAPHLK"/>
<dbReference type="GO" id="GO:0019385">
    <property type="term" value="P:methanogenesis, from acetate"/>
    <property type="evidence" value="ECO:0007669"/>
    <property type="project" value="InterPro"/>
</dbReference>
<dbReference type="Gene3D" id="3.40.50.1220">
    <property type="entry name" value="TPP-binding domain"/>
    <property type="match status" value="1"/>
</dbReference>
<dbReference type="HAMAP" id="MF_01134">
    <property type="entry name" value="CdhB"/>
    <property type="match status" value="1"/>
</dbReference>
<dbReference type="InterPro" id="IPR003704">
    <property type="entry name" value="CdhB"/>
</dbReference>
<dbReference type="InterPro" id="IPR029035">
    <property type="entry name" value="DHS-like_NAD/FAD-binding_dom"/>
</dbReference>
<dbReference type="NCBIfam" id="TIGR00315">
    <property type="entry name" value="cdhB"/>
    <property type="match status" value="1"/>
</dbReference>
<dbReference type="Pfam" id="PF02552">
    <property type="entry name" value="CO_dh"/>
    <property type="match status" value="1"/>
</dbReference>
<dbReference type="PIRSF" id="PIRSF006035">
    <property type="entry name" value="CO_dh_b_ACDS_e"/>
    <property type="match status" value="1"/>
</dbReference>
<dbReference type="SUPFAM" id="SSF52467">
    <property type="entry name" value="DHS-like NAD/FAD-binding domain"/>
    <property type="match status" value="1"/>
</dbReference>
<proteinExistence type="evidence at protein level"/>
<organism>
    <name type="scientific">Methanothrix soehngenii</name>
    <name type="common">Methanosaeta concilii</name>
    <dbReference type="NCBI Taxonomy" id="2223"/>
    <lineage>
        <taxon>Archaea</taxon>
        <taxon>Methanobacteriati</taxon>
        <taxon>Methanobacteriota</taxon>
        <taxon>Stenosarchaea group</taxon>
        <taxon>Methanomicrobia</taxon>
        <taxon>Methanotrichales</taxon>
        <taxon>Methanotrichaceae</taxon>
        <taxon>Methanothrix</taxon>
    </lineage>
</organism>
<evidence type="ECO:0000255" key="1">
    <source>
        <dbReference type="HAMAP-Rule" id="MF_01134"/>
    </source>
</evidence>
<comment type="function">
    <text evidence="1">Part of a complex that catalyzes the reversible cleavage of acetyl-CoA, allowing autotrophic growth from CO(2). The alpha-epsilon subcomponent functions as a carbon monoxide dehydrogenase. The precise role of the epsilon subunit is unclear; it may have a stabilizing role within the alpha(2)epsilon(2) component and/or be involved in electron transfer to FAD during a potential FAD-mediated CO oxidation.</text>
</comment>
<comment type="subunit">
    <text evidence="1">Heterotetramer of two alpha and two epsilon subunits. The ACDS complex is made up of alpha, epsilon, beta, gamma and delta subunits with a probable stoichiometry of (alpha(2)epsilon(2))(4)-beta(8)-(gamma(1)delta(1))(8).</text>
</comment>
<comment type="similarity">
    <text evidence="1">Belongs to the CdhB family.</text>
</comment>
<feature type="chain" id="PRO_0000155094" description="Acetyl-CoA decarbonylase/synthase complex subunit epsilon">
    <location>
        <begin position="1"/>
        <end position="187"/>
    </location>
</feature>
<feature type="modified residue" description="Blocked amino end (Met)">
    <location>
        <position position="1"/>
    </location>
</feature>
<accession>P26693</accession>
<reference key="1">
    <citation type="journal article" date="1991" name="J. Biol. Chem.">
        <title>Cloning, expression, and sequence analysis of the genes for carbon monoxide dehydrogenase of Methanothrix soehngenii.</title>
        <authorList>
            <person name="Eggen R.I.L."/>
            <person name="Geerling A.C.M."/>
            <person name="Jetten M.S.M."/>
            <person name="de Vos W.M."/>
        </authorList>
    </citation>
    <scope>NUCLEOTIDE SEQUENCE [GENOMIC DNA]</scope>
    <scope>BLOCKAGE OF N-TERMINUS</scope>
    <source>
        <strain>Opfikon / DSM 2139</strain>
    </source>
</reference>